<keyword id="KW-0002">3D-structure</keyword>
<keyword id="KW-0235">DNA replication</keyword>
<keyword id="KW-0238">DNA-binding</keyword>
<keyword id="KW-0239">DNA-directed DNA polymerase</keyword>
<keyword id="KW-0479">Metal-binding</keyword>
<keyword id="KW-0548">Nucleotidyltransferase</keyword>
<keyword id="KW-0539">Nucleus</keyword>
<keyword id="KW-1185">Reference proteome</keyword>
<keyword id="KW-0808">Transferase</keyword>
<keyword id="KW-0862">Zinc</keyword>
<keyword id="KW-0863">Zinc-finger</keyword>
<organism>
    <name type="scientific">Xenopus laevis</name>
    <name type="common">African clawed frog</name>
    <dbReference type="NCBI Taxonomy" id="8355"/>
    <lineage>
        <taxon>Eukaryota</taxon>
        <taxon>Metazoa</taxon>
        <taxon>Chordata</taxon>
        <taxon>Craniata</taxon>
        <taxon>Vertebrata</taxon>
        <taxon>Euteleostomi</taxon>
        <taxon>Amphibia</taxon>
        <taxon>Batrachia</taxon>
        <taxon>Anura</taxon>
        <taxon>Pipoidea</taxon>
        <taxon>Pipidae</taxon>
        <taxon>Xenopodinae</taxon>
        <taxon>Xenopus</taxon>
        <taxon>Xenopus</taxon>
    </lineage>
</organism>
<feature type="chain" id="PRO_0000046431" description="DNA polymerase alpha catalytic subunit">
    <location>
        <begin position="1"/>
        <end position="1458"/>
    </location>
</feature>
<feature type="zinc finger region" description="CysA-type">
    <location>
        <begin position="1280"/>
        <end position="1310"/>
    </location>
</feature>
<feature type="region of interest" description="Disordered" evidence="4">
    <location>
        <begin position="1"/>
        <end position="25"/>
    </location>
</feature>
<feature type="region of interest" description="Disordered" evidence="4">
    <location>
        <begin position="89"/>
        <end position="119"/>
    </location>
</feature>
<feature type="region of interest" description="DNA-binding" evidence="3">
    <location>
        <begin position="650"/>
        <end position="715"/>
    </location>
</feature>
<feature type="region of interest" description="DNA-binding" evidence="3">
    <location>
        <begin position="1241"/>
        <end position="1373"/>
    </location>
</feature>
<feature type="short sequence motif" description="CysB motif">
    <location>
        <begin position="1345"/>
        <end position="1371"/>
    </location>
</feature>
<feature type="compositionally biased region" description="Basic and acidic residues" evidence="4">
    <location>
        <begin position="15"/>
        <end position="25"/>
    </location>
</feature>
<feature type="binding site" evidence="2">
    <location>
        <position position="1280"/>
    </location>
    <ligand>
        <name>Zn(2+)</name>
        <dbReference type="ChEBI" id="CHEBI:29105"/>
        <label>1</label>
    </ligand>
</feature>
<feature type="binding site" evidence="2">
    <location>
        <position position="1283"/>
    </location>
    <ligand>
        <name>Zn(2+)</name>
        <dbReference type="ChEBI" id="CHEBI:29105"/>
        <label>1</label>
    </ligand>
</feature>
<feature type="binding site" evidence="2">
    <location>
        <position position="1307"/>
    </location>
    <ligand>
        <name>Zn(2+)</name>
        <dbReference type="ChEBI" id="CHEBI:29105"/>
        <label>1</label>
    </ligand>
</feature>
<feature type="binding site" evidence="2">
    <location>
        <position position="1312"/>
    </location>
    <ligand>
        <name>Zn(2+)</name>
        <dbReference type="ChEBI" id="CHEBI:29105"/>
        <label>1</label>
    </ligand>
</feature>
<feature type="binding site" evidence="2">
    <location>
        <position position="1345"/>
    </location>
    <ligand>
        <name>Zn(2+)</name>
        <dbReference type="ChEBI" id="CHEBI:29105"/>
        <label>2</label>
    </ligand>
</feature>
<feature type="binding site" evidence="2">
    <location>
        <position position="1350"/>
    </location>
    <ligand>
        <name>Zn(2+)</name>
        <dbReference type="ChEBI" id="CHEBI:29105"/>
        <label>2</label>
    </ligand>
</feature>
<feature type="binding site" evidence="2">
    <location>
        <position position="1368"/>
    </location>
    <ligand>
        <name>Zn(2+)</name>
        <dbReference type="ChEBI" id="CHEBI:29105"/>
        <label>2</label>
    </ligand>
</feature>
<feature type="binding site" evidence="2">
    <location>
        <position position="1371"/>
    </location>
    <ligand>
        <name>Zn(2+)</name>
        <dbReference type="ChEBI" id="CHEBI:29105"/>
        <label>2</label>
    </ligand>
</feature>
<feature type="strand" evidence="6">
    <location>
        <begin position="340"/>
        <end position="350"/>
    </location>
</feature>
<feature type="turn" evidence="6">
    <location>
        <begin position="352"/>
        <end position="354"/>
    </location>
</feature>
<feature type="strand" evidence="6">
    <location>
        <begin position="359"/>
        <end position="367"/>
    </location>
</feature>
<feature type="turn" evidence="6">
    <location>
        <begin position="368"/>
        <end position="371"/>
    </location>
</feature>
<feature type="strand" evidence="6">
    <location>
        <begin position="372"/>
        <end position="380"/>
    </location>
</feature>
<feature type="strand" evidence="6">
    <location>
        <begin position="385"/>
        <end position="391"/>
    </location>
</feature>
<feature type="strand" evidence="6">
    <location>
        <begin position="393"/>
        <end position="397"/>
    </location>
</feature>
<feature type="turn" evidence="6">
    <location>
        <begin position="398"/>
        <end position="401"/>
    </location>
</feature>
<feature type="strand" evidence="6">
    <location>
        <begin position="402"/>
        <end position="407"/>
    </location>
</feature>
<feature type="helix" evidence="6">
    <location>
        <begin position="410"/>
        <end position="419"/>
    </location>
</feature>
<feature type="helix" evidence="6">
    <location>
        <begin position="421"/>
        <end position="424"/>
    </location>
</feature>
<feature type="strand" evidence="6">
    <location>
        <begin position="430"/>
        <end position="438"/>
    </location>
</feature>
<feature type="strand" evidence="6">
    <location>
        <begin position="448"/>
        <end position="457"/>
    </location>
</feature>
<feature type="strand" evidence="7">
    <location>
        <begin position="459"/>
        <end position="461"/>
    </location>
</feature>
<feature type="strand" evidence="6">
    <location>
        <begin position="471"/>
        <end position="477"/>
    </location>
</feature>
<feature type="helix" evidence="6">
    <location>
        <begin position="483"/>
        <end position="491"/>
    </location>
</feature>
<feature type="strand" evidence="6">
    <location>
        <begin position="495"/>
        <end position="503"/>
    </location>
</feature>
<feature type="strand" evidence="6">
    <location>
        <begin position="512"/>
        <end position="522"/>
    </location>
</feature>
<feature type="helix" evidence="6">
    <location>
        <begin position="523"/>
        <end position="525"/>
    </location>
</feature>
<feature type="strand" evidence="6">
    <location>
        <begin position="526"/>
        <end position="528"/>
    </location>
</feature>
<feature type="strand" evidence="6">
    <location>
        <begin position="537"/>
        <end position="548"/>
    </location>
</feature>
<feature type="turn" evidence="6">
    <location>
        <begin position="550"/>
        <end position="552"/>
    </location>
</feature>
<feature type="strand" evidence="6">
    <location>
        <begin position="555"/>
        <end position="568"/>
    </location>
</feature>
<feature type="strand" evidence="6">
    <location>
        <begin position="570"/>
        <end position="572"/>
    </location>
</feature>
<feature type="strand" evidence="6">
    <location>
        <begin position="576"/>
        <end position="578"/>
    </location>
</feature>
<feature type="strand" evidence="6">
    <location>
        <begin position="580"/>
        <end position="587"/>
    </location>
</feature>
<feature type="helix" evidence="6">
    <location>
        <begin position="598"/>
        <end position="605"/>
    </location>
</feature>
<feature type="strand" evidence="6">
    <location>
        <begin position="609"/>
        <end position="614"/>
    </location>
</feature>
<feature type="helix" evidence="6">
    <location>
        <begin position="615"/>
        <end position="629"/>
    </location>
</feature>
<feature type="strand" evidence="6">
    <location>
        <begin position="632"/>
        <end position="638"/>
    </location>
</feature>
<feature type="turn" evidence="6">
    <location>
        <begin position="639"/>
        <end position="642"/>
    </location>
</feature>
<feature type="helix" evidence="6">
    <location>
        <begin position="643"/>
        <end position="654"/>
    </location>
</feature>
<feature type="helix" evidence="6">
    <location>
        <begin position="659"/>
        <end position="662"/>
    </location>
</feature>
<feature type="strand" evidence="6">
    <location>
        <begin position="663"/>
        <end position="665"/>
    </location>
</feature>
<feature type="turn" evidence="6">
    <location>
        <begin position="675"/>
        <end position="677"/>
    </location>
</feature>
<feature type="helix" evidence="6">
    <location>
        <begin position="680"/>
        <end position="682"/>
    </location>
</feature>
<feature type="turn" evidence="6">
    <location>
        <begin position="684"/>
        <end position="687"/>
    </location>
</feature>
<feature type="strand" evidence="6">
    <location>
        <begin position="688"/>
        <end position="692"/>
    </location>
</feature>
<feature type="helix" evidence="6">
    <location>
        <begin position="693"/>
        <end position="700"/>
    </location>
</feature>
<feature type="helix" evidence="6">
    <location>
        <begin position="708"/>
        <end position="715"/>
    </location>
</feature>
<feature type="helix" evidence="6">
    <location>
        <begin position="725"/>
        <end position="728"/>
    </location>
</feature>
<feature type="helix" evidence="6">
    <location>
        <begin position="729"/>
        <end position="733"/>
    </location>
</feature>
<feature type="helix" evidence="6">
    <location>
        <begin position="735"/>
        <end position="759"/>
    </location>
</feature>
<feature type="helix" evidence="6">
    <location>
        <begin position="761"/>
        <end position="772"/>
    </location>
</feature>
<feature type="helix" evidence="6">
    <location>
        <begin position="776"/>
        <end position="781"/>
    </location>
</feature>
<feature type="helix" evidence="6">
    <location>
        <begin position="788"/>
        <end position="797"/>
    </location>
</feature>
<feature type="turn" evidence="6">
    <location>
        <begin position="798"/>
        <end position="800"/>
    </location>
</feature>
<feature type="strand" evidence="6">
    <location>
        <begin position="849"/>
        <end position="851"/>
    </location>
</feature>
<feature type="strand" evidence="6">
    <location>
        <begin position="855"/>
        <end position="859"/>
    </location>
</feature>
<feature type="helix" evidence="6">
    <location>
        <begin position="863"/>
        <end position="870"/>
    </location>
</feature>
<feature type="turn" evidence="6">
    <location>
        <begin position="875"/>
        <end position="877"/>
    </location>
</feature>
<feature type="helix" evidence="6">
    <location>
        <begin position="906"/>
        <end position="926"/>
    </location>
</feature>
<feature type="strand" evidence="6">
    <location>
        <begin position="927"/>
        <end position="929"/>
    </location>
</feature>
<feature type="helix" evidence="6">
    <location>
        <begin position="932"/>
        <end position="951"/>
    </location>
</feature>
<feature type="helix" evidence="6">
    <location>
        <begin position="954"/>
        <end position="957"/>
    </location>
</feature>
<feature type="helix" evidence="6">
    <location>
        <begin position="966"/>
        <end position="989"/>
    </location>
</feature>
<feature type="strand" evidence="6">
    <location>
        <begin position="993"/>
        <end position="998"/>
    </location>
</feature>
<feature type="strand" evidence="6">
    <location>
        <begin position="1001"/>
        <end position="1005"/>
    </location>
</feature>
<feature type="helix" evidence="6">
    <location>
        <begin position="1011"/>
        <end position="1028"/>
    </location>
</feature>
<feature type="strand" evidence="6">
    <location>
        <begin position="1035"/>
        <end position="1047"/>
    </location>
</feature>
<feature type="strand" evidence="6">
    <location>
        <begin position="1050"/>
        <end position="1060"/>
    </location>
</feature>
<feature type="strand" evidence="6">
    <location>
        <begin position="1063"/>
        <end position="1072"/>
    </location>
</feature>
<feature type="helix" evidence="9">
    <location>
        <begin position="1074"/>
        <end position="1076"/>
    </location>
</feature>
<feature type="helix" evidence="6">
    <location>
        <begin position="1082"/>
        <end position="1095"/>
    </location>
</feature>
<feature type="strand" evidence="6">
    <location>
        <begin position="1097"/>
        <end position="1099"/>
    </location>
</feature>
<feature type="helix" evidence="6">
    <location>
        <begin position="1101"/>
        <end position="1121"/>
    </location>
</feature>
<feature type="helix" evidence="6">
    <location>
        <begin position="1126"/>
        <end position="1129"/>
    </location>
</feature>
<feature type="strand" evidence="6">
    <location>
        <begin position="1131"/>
        <end position="1134"/>
    </location>
</feature>
<feature type="helix" evidence="6">
    <location>
        <begin position="1139"/>
        <end position="1141"/>
    </location>
</feature>
<feature type="helix" evidence="6">
    <location>
        <begin position="1145"/>
        <end position="1147"/>
    </location>
</feature>
<feature type="helix" evidence="6">
    <location>
        <begin position="1149"/>
        <end position="1160"/>
    </location>
</feature>
<feature type="strand" evidence="6">
    <location>
        <begin position="1170"/>
        <end position="1177"/>
    </location>
</feature>
<feature type="turn" evidence="6">
    <location>
        <begin position="1184"/>
        <end position="1186"/>
    </location>
</feature>
<feature type="strand" evidence="6">
    <location>
        <begin position="1187"/>
        <end position="1189"/>
    </location>
</feature>
<feature type="helix" evidence="6">
    <location>
        <begin position="1191"/>
        <end position="1197"/>
    </location>
</feature>
<feature type="helix" evidence="6">
    <location>
        <begin position="1204"/>
        <end position="1209"/>
    </location>
</feature>
<feature type="helix" evidence="6">
    <location>
        <begin position="1212"/>
        <end position="1220"/>
    </location>
</feature>
<feature type="strand" evidence="8">
    <location>
        <begin position="1221"/>
        <end position="1223"/>
    </location>
</feature>
<feature type="helix" evidence="6">
    <location>
        <begin position="1228"/>
        <end position="1235"/>
    </location>
</feature>
<feature type="helix" evidence="6">
    <location>
        <begin position="1239"/>
        <end position="1241"/>
    </location>
</feature>
<feature type="helix" evidence="6">
    <location>
        <begin position="1252"/>
        <end position="1257"/>
    </location>
</feature>
<feature type="helix" evidence="6">
    <location>
        <begin position="1261"/>
        <end position="1263"/>
    </location>
</feature>
<feature type="helix" evidence="6">
    <location>
        <begin position="1266"/>
        <end position="1269"/>
    </location>
</feature>
<feature type="turn" evidence="6">
    <location>
        <begin position="1270"/>
        <end position="1272"/>
    </location>
</feature>
<feature type="strand" evidence="6">
    <location>
        <begin position="1276"/>
        <end position="1279"/>
    </location>
</feature>
<feature type="turn" evidence="6">
    <location>
        <begin position="1281"/>
        <end position="1283"/>
    </location>
</feature>
<feature type="strand" evidence="6">
    <location>
        <begin position="1286"/>
        <end position="1289"/>
    </location>
</feature>
<feature type="strand" evidence="6">
    <location>
        <begin position="1291"/>
        <end position="1296"/>
    </location>
</feature>
<feature type="helix" evidence="6">
    <location>
        <begin position="1297"/>
        <end position="1299"/>
    </location>
</feature>
<feature type="helix" evidence="6">
    <location>
        <begin position="1303"/>
        <end position="1305"/>
    </location>
</feature>
<feature type="helix" evidence="6">
    <location>
        <begin position="1316"/>
        <end position="1319"/>
    </location>
</feature>
<feature type="helix" evidence="6">
    <location>
        <begin position="1320"/>
        <end position="1339"/>
    </location>
</feature>
<feature type="strand" evidence="6">
    <location>
        <begin position="1343"/>
        <end position="1346"/>
    </location>
</feature>
<feature type="turn" evidence="6">
    <location>
        <begin position="1348"/>
        <end position="1350"/>
    </location>
</feature>
<feature type="strand" evidence="6">
    <location>
        <begin position="1353"/>
        <end position="1355"/>
    </location>
</feature>
<feature type="strand" evidence="6">
    <location>
        <begin position="1363"/>
        <end position="1367"/>
    </location>
</feature>
<feature type="turn" evidence="6">
    <location>
        <begin position="1369"/>
        <end position="1371"/>
    </location>
</feature>
<feature type="strand" evidence="6">
    <location>
        <begin position="1372"/>
        <end position="1380"/>
    </location>
</feature>
<feature type="helix" evidence="6">
    <location>
        <begin position="1382"/>
        <end position="1394"/>
    </location>
</feature>
<feature type="helix" evidence="6">
    <location>
        <begin position="1398"/>
        <end position="1403"/>
    </location>
</feature>
<feature type="helix" evidence="6">
    <location>
        <begin position="1408"/>
        <end position="1414"/>
    </location>
</feature>
<feature type="helix" evidence="6">
    <location>
        <begin position="1420"/>
        <end position="1438"/>
    </location>
</feature>
<feature type="strand" evidence="6">
    <location>
        <begin position="1444"/>
        <end position="1446"/>
    </location>
</feature>
<feature type="helix" evidence="6">
    <location>
        <begin position="1447"/>
        <end position="1450"/>
    </location>
</feature>
<dbReference type="EC" id="2.7.7.7"/>
<dbReference type="EMBL" id="AF202992">
    <property type="protein sequence ID" value="AAG35630.1"/>
    <property type="molecule type" value="mRNA"/>
</dbReference>
<dbReference type="RefSeq" id="NP_001082055.1">
    <property type="nucleotide sequence ID" value="NM_001088586.1"/>
</dbReference>
<dbReference type="PDB" id="8G99">
    <property type="method" value="EM"/>
    <property type="resolution" value="2.80 A"/>
    <property type="chains" value="A=335-1458"/>
</dbReference>
<dbReference type="PDB" id="8G9F">
    <property type="method" value="EM"/>
    <property type="resolution" value="3.20 A"/>
    <property type="chains" value="A=335-1458"/>
</dbReference>
<dbReference type="PDB" id="8G9L">
    <property type="method" value="EM"/>
    <property type="resolution" value="3.30 A"/>
    <property type="chains" value="A=335-1458"/>
</dbReference>
<dbReference type="PDB" id="8G9N">
    <property type="method" value="EM"/>
    <property type="resolution" value="3.50 A"/>
    <property type="chains" value="A=335-1458"/>
</dbReference>
<dbReference type="PDB" id="8G9O">
    <property type="method" value="EM"/>
    <property type="resolution" value="4.40 A"/>
    <property type="chains" value="A=335-1458"/>
</dbReference>
<dbReference type="PDB" id="8UCU">
    <property type="method" value="EM"/>
    <property type="resolution" value="2.85 A"/>
    <property type="chains" value="A=335-1458"/>
</dbReference>
<dbReference type="PDB" id="8UCV">
    <property type="method" value="EM"/>
    <property type="resolution" value="3.81 A"/>
    <property type="chains" value="A=335-1458"/>
</dbReference>
<dbReference type="PDB" id="8UCW">
    <property type="method" value="EM"/>
    <property type="resolution" value="3.64 A"/>
    <property type="chains" value="A=335-1458"/>
</dbReference>
<dbReference type="PDB" id="8V5M">
    <property type="method" value="EM"/>
    <property type="resolution" value="9.22 A"/>
    <property type="chains" value="A=335-1458"/>
</dbReference>
<dbReference type="PDB" id="8V5N">
    <property type="method" value="EM"/>
    <property type="resolution" value="8.56 A"/>
    <property type="chains" value="A=335-1458"/>
</dbReference>
<dbReference type="PDB" id="8V5O">
    <property type="method" value="EM"/>
    <property type="resolution" value="8.99 A"/>
    <property type="chains" value="A=335-1458"/>
</dbReference>
<dbReference type="PDB" id="8V6G">
    <property type="method" value="EM"/>
    <property type="resolution" value="11.16 A"/>
    <property type="chains" value="A=335-1458"/>
</dbReference>
<dbReference type="PDB" id="8V6H">
    <property type="method" value="EM"/>
    <property type="resolution" value="11.11 A"/>
    <property type="chains" value="A=335-1458"/>
</dbReference>
<dbReference type="PDB" id="8V6I">
    <property type="method" value="EM"/>
    <property type="resolution" value="14.06 A"/>
    <property type="chains" value="A=335-1458"/>
</dbReference>
<dbReference type="PDB" id="8V6J">
    <property type="method" value="EM"/>
    <property type="resolution" value="11.11 A"/>
    <property type="chains" value="A=335-1458"/>
</dbReference>
<dbReference type="PDBsum" id="8G99"/>
<dbReference type="PDBsum" id="8G9F"/>
<dbReference type="PDBsum" id="8G9L"/>
<dbReference type="PDBsum" id="8G9N"/>
<dbReference type="PDBsum" id="8G9O"/>
<dbReference type="PDBsum" id="8UCU"/>
<dbReference type="PDBsum" id="8UCV"/>
<dbReference type="PDBsum" id="8UCW"/>
<dbReference type="PDBsum" id="8V5M"/>
<dbReference type="PDBsum" id="8V5N"/>
<dbReference type="PDBsum" id="8V5O"/>
<dbReference type="PDBsum" id="8V6G"/>
<dbReference type="PDBsum" id="8V6H"/>
<dbReference type="PDBsum" id="8V6I"/>
<dbReference type="PDBsum" id="8V6J"/>
<dbReference type="EMDB" id="EMD-29862"/>
<dbReference type="EMDB" id="EMD-29864"/>
<dbReference type="EMDB" id="EMD-29871"/>
<dbReference type="EMDB" id="EMD-29872"/>
<dbReference type="EMDB" id="EMD-29873"/>
<dbReference type="EMDB" id="EMD-29886"/>
<dbReference type="EMDB" id="EMD-29888"/>
<dbReference type="EMDB" id="EMD-29889"/>
<dbReference type="EMDB" id="EMD-29891"/>
<dbReference type="EMDB" id="EMD-42140"/>
<dbReference type="EMDB" id="EMD-42141"/>
<dbReference type="EMDB" id="EMD-42142"/>
<dbReference type="EMDB" id="EMD-42990"/>
<dbReference type="EMDB" id="EMD-42991"/>
<dbReference type="EMDB" id="EMD-42992"/>
<dbReference type="EMDB" id="EMD-42993"/>
<dbReference type="SMR" id="Q9DE46"/>
<dbReference type="BioGRID" id="99535">
    <property type="interactions" value="2"/>
</dbReference>
<dbReference type="IntAct" id="Q9DE46">
    <property type="interactions" value="3"/>
</dbReference>
<dbReference type="MINT" id="Q9DE46"/>
<dbReference type="GeneID" id="398200"/>
<dbReference type="KEGG" id="xla:398200"/>
<dbReference type="CTD" id="398200"/>
<dbReference type="Xenbase" id="XB-GENE-1000552">
    <property type="gene designation" value="pola1.S"/>
</dbReference>
<dbReference type="OrthoDB" id="6755010at2759"/>
<dbReference type="Proteomes" id="UP000186698">
    <property type="component" value="Chromosome 2S"/>
</dbReference>
<dbReference type="Bgee" id="398200">
    <property type="expression patterns" value="Expressed in egg cell and 19 other cell types or tissues"/>
</dbReference>
<dbReference type="GO" id="GO:0005658">
    <property type="term" value="C:alpha DNA polymerase:primase complex"/>
    <property type="evidence" value="ECO:0000250"/>
    <property type="project" value="UniProtKB"/>
</dbReference>
<dbReference type="GO" id="GO:0000785">
    <property type="term" value="C:chromatin"/>
    <property type="evidence" value="ECO:0000250"/>
    <property type="project" value="UniProtKB"/>
</dbReference>
<dbReference type="GO" id="GO:0005635">
    <property type="term" value="C:nuclear envelope"/>
    <property type="evidence" value="ECO:0000250"/>
    <property type="project" value="UniProtKB"/>
</dbReference>
<dbReference type="GO" id="GO:0016363">
    <property type="term" value="C:nuclear matrix"/>
    <property type="evidence" value="ECO:0000250"/>
    <property type="project" value="UniProtKB"/>
</dbReference>
<dbReference type="GO" id="GO:0005730">
    <property type="term" value="C:nucleolus"/>
    <property type="evidence" value="ECO:0000250"/>
    <property type="project" value="UniProtKB"/>
</dbReference>
<dbReference type="GO" id="GO:0005654">
    <property type="term" value="C:nucleoplasm"/>
    <property type="evidence" value="ECO:0000250"/>
    <property type="project" value="UniProtKB"/>
</dbReference>
<dbReference type="GO" id="GO:0005634">
    <property type="term" value="C:nucleus"/>
    <property type="evidence" value="ECO:0000250"/>
    <property type="project" value="UniProtKB"/>
</dbReference>
<dbReference type="GO" id="GO:0003682">
    <property type="term" value="F:chromatin binding"/>
    <property type="evidence" value="ECO:0000250"/>
    <property type="project" value="UniProtKB"/>
</dbReference>
<dbReference type="GO" id="GO:0003677">
    <property type="term" value="F:DNA binding"/>
    <property type="evidence" value="ECO:0000250"/>
    <property type="project" value="UniProtKB"/>
</dbReference>
<dbReference type="GO" id="GO:0003688">
    <property type="term" value="F:DNA replication origin binding"/>
    <property type="evidence" value="ECO:0000318"/>
    <property type="project" value="GO_Central"/>
</dbReference>
<dbReference type="GO" id="GO:0003887">
    <property type="term" value="F:DNA-directed DNA polymerase activity"/>
    <property type="evidence" value="ECO:0000250"/>
    <property type="project" value="UniProtKB"/>
</dbReference>
<dbReference type="GO" id="GO:0000166">
    <property type="term" value="F:nucleotide binding"/>
    <property type="evidence" value="ECO:0000250"/>
    <property type="project" value="UniProtKB"/>
</dbReference>
<dbReference type="GO" id="GO:0003697">
    <property type="term" value="F:single-stranded DNA binding"/>
    <property type="evidence" value="ECO:0000318"/>
    <property type="project" value="GO_Central"/>
</dbReference>
<dbReference type="GO" id="GO:0008270">
    <property type="term" value="F:zinc ion binding"/>
    <property type="evidence" value="ECO:0007669"/>
    <property type="project" value="UniProtKB-KW"/>
</dbReference>
<dbReference type="GO" id="GO:0006260">
    <property type="term" value="P:DNA replication"/>
    <property type="evidence" value="ECO:0000250"/>
    <property type="project" value="UniProtKB"/>
</dbReference>
<dbReference type="GO" id="GO:0006270">
    <property type="term" value="P:DNA replication initiation"/>
    <property type="evidence" value="ECO:0000250"/>
    <property type="project" value="UniProtKB"/>
</dbReference>
<dbReference type="GO" id="GO:0006269">
    <property type="term" value="P:DNA replication, synthesis of primer"/>
    <property type="evidence" value="ECO:0000250"/>
    <property type="project" value="UniProtKB"/>
</dbReference>
<dbReference type="GO" id="GO:0006271">
    <property type="term" value="P:DNA strand elongation involved in DNA replication"/>
    <property type="evidence" value="ECO:0000250"/>
    <property type="project" value="UniProtKB"/>
</dbReference>
<dbReference type="GO" id="GO:0006303">
    <property type="term" value="P:double-strand break repair via nonhomologous end joining"/>
    <property type="evidence" value="ECO:0000250"/>
    <property type="project" value="UniProtKB"/>
</dbReference>
<dbReference type="GO" id="GO:0006273">
    <property type="term" value="P:lagging strand elongation"/>
    <property type="evidence" value="ECO:0000250"/>
    <property type="project" value="UniProtKB"/>
</dbReference>
<dbReference type="GO" id="GO:0006272">
    <property type="term" value="P:leading strand elongation"/>
    <property type="evidence" value="ECO:0000250"/>
    <property type="project" value="UniProtKB"/>
</dbReference>
<dbReference type="GO" id="GO:1902975">
    <property type="term" value="P:mitotic DNA replication initiation"/>
    <property type="evidence" value="ECO:0000318"/>
    <property type="project" value="GO_Central"/>
</dbReference>
<dbReference type="CDD" id="cd05776">
    <property type="entry name" value="DNA_polB_alpha_exo"/>
    <property type="match status" value="1"/>
</dbReference>
<dbReference type="CDD" id="cd05532">
    <property type="entry name" value="POLBc_alpha"/>
    <property type="match status" value="1"/>
</dbReference>
<dbReference type="FunFam" id="1.10.132.60:FF:000006">
    <property type="entry name" value="DNA polymerase"/>
    <property type="match status" value="1"/>
</dbReference>
<dbReference type="FunFam" id="1.10.287.690:FF:000003">
    <property type="entry name" value="DNA polymerase"/>
    <property type="match status" value="1"/>
</dbReference>
<dbReference type="FunFam" id="1.10.3200.20:FF:000001">
    <property type="entry name" value="DNA polymerase"/>
    <property type="match status" value="1"/>
</dbReference>
<dbReference type="FunFam" id="3.30.420.10:FF:000018">
    <property type="entry name" value="DNA polymerase"/>
    <property type="match status" value="1"/>
</dbReference>
<dbReference type="FunFam" id="3.30.70.2820:FF:000001">
    <property type="entry name" value="DNA polymerase"/>
    <property type="match status" value="1"/>
</dbReference>
<dbReference type="FunFam" id="3.90.1600.10:FF:000022">
    <property type="entry name" value="DNA polymerase"/>
    <property type="match status" value="1"/>
</dbReference>
<dbReference type="FunFam" id="3.90.1600.10:FF:000023">
    <property type="entry name" value="DNA polymerase"/>
    <property type="match status" value="1"/>
</dbReference>
<dbReference type="Gene3D" id="2.40.50.730">
    <property type="match status" value="1"/>
</dbReference>
<dbReference type="Gene3D" id="3.30.70.2820">
    <property type="match status" value="1"/>
</dbReference>
<dbReference type="Gene3D" id="1.10.3200.20">
    <property type="entry name" value="DNA Polymerase alpha, zinc finger"/>
    <property type="match status" value="1"/>
</dbReference>
<dbReference type="Gene3D" id="1.10.132.60">
    <property type="entry name" value="DNA polymerase family B, C-terminal domain"/>
    <property type="match status" value="1"/>
</dbReference>
<dbReference type="Gene3D" id="1.10.287.690">
    <property type="entry name" value="Helix hairpin bin"/>
    <property type="match status" value="1"/>
</dbReference>
<dbReference type="Gene3D" id="3.90.1600.10">
    <property type="entry name" value="Palm domain of DNA polymerase"/>
    <property type="match status" value="1"/>
</dbReference>
<dbReference type="Gene3D" id="3.30.420.10">
    <property type="entry name" value="Ribonuclease H-like superfamily/Ribonuclease H"/>
    <property type="match status" value="1"/>
</dbReference>
<dbReference type="InterPro" id="IPR006172">
    <property type="entry name" value="DNA-dir_DNA_pol_B"/>
</dbReference>
<dbReference type="InterPro" id="IPR017964">
    <property type="entry name" value="DNA-dir_DNA_pol_B_CS"/>
</dbReference>
<dbReference type="InterPro" id="IPR006133">
    <property type="entry name" value="DNA-dir_DNA_pol_B_exonuc"/>
</dbReference>
<dbReference type="InterPro" id="IPR006134">
    <property type="entry name" value="DNA-dir_DNA_pol_B_multi_dom"/>
</dbReference>
<dbReference type="InterPro" id="IPR043502">
    <property type="entry name" value="DNA/RNA_pol_sf"/>
</dbReference>
<dbReference type="InterPro" id="IPR024647">
    <property type="entry name" value="DNA_pol_a_cat_su_N"/>
</dbReference>
<dbReference type="InterPro" id="IPR042087">
    <property type="entry name" value="DNA_pol_B_thumb"/>
</dbReference>
<dbReference type="InterPro" id="IPR023211">
    <property type="entry name" value="DNA_pol_palm_dom_sf"/>
</dbReference>
<dbReference type="InterPro" id="IPR038256">
    <property type="entry name" value="Pol_alpha_znc_sf"/>
</dbReference>
<dbReference type="InterPro" id="IPR045846">
    <property type="entry name" value="POLBc_alpha"/>
</dbReference>
<dbReference type="InterPro" id="IPR012337">
    <property type="entry name" value="RNaseH-like_sf"/>
</dbReference>
<dbReference type="InterPro" id="IPR036397">
    <property type="entry name" value="RNaseH_sf"/>
</dbReference>
<dbReference type="InterPro" id="IPR015088">
    <property type="entry name" value="Znf_DNA-dir_DNA_pol_B_alpha"/>
</dbReference>
<dbReference type="NCBIfam" id="TIGR00592">
    <property type="entry name" value="pol2"/>
    <property type="match status" value="1"/>
</dbReference>
<dbReference type="PANTHER" id="PTHR45861">
    <property type="entry name" value="DNA POLYMERASE ALPHA CATALYTIC SUBUNIT"/>
    <property type="match status" value="1"/>
</dbReference>
<dbReference type="PANTHER" id="PTHR45861:SF1">
    <property type="entry name" value="DNA POLYMERASE ALPHA CATALYTIC SUBUNIT"/>
    <property type="match status" value="1"/>
</dbReference>
<dbReference type="Pfam" id="PF12254">
    <property type="entry name" value="DNA_pol_alpha_N"/>
    <property type="match status" value="1"/>
</dbReference>
<dbReference type="Pfam" id="PF00136">
    <property type="entry name" value="DNA_pol_B"/>
    <property type="match status" value="1"/>
</dbReference>
<dbReference type="Pfam" id="PF03104">
    <property type="entry name" value="DNA_pol_B_exo1"/>
    <property type="match status" value="1"/>
</dbReference>
<dbReference type="Pfam" id="PF08996">
    <property type="entry name" value="zf-DNA_Pol"/>
    <property type="match status" value="1"/>
</dbReference>
<dbReference type="PRINTS" id="PR00106">
    <property type="entry name" value="DNAPOLB"/>
</dbReference>
<dbReference type="SMART" id="SM00486">
    <property type="entry name" value="POLBc"/>
    <property type="match status" value="1"/>
</dbReference>
<dbReference type="SUPFAM" id="SSF56672">
    <property type="entry name" value="DNA/RNA polymerases"/>
    <property type="match status" value="1"/>
</dbReference>
<dbReference type="SUPFAM" id="SSF53098">
    <property type="entry name" value="Ribonuclease H-like"/>
    <property type="match status" value="1"/>
</dbReference>
<dbReference type="SUPFAM" id="SSF90234">
    <property type="entry name" value="Zinc finger domain of DNA polymerase-alpha"/>
    <property type="match status" value="1"/>
</dbReference>
<dbReference type="PROSITE" id="PS00116">
    <property type="entry name" value="DNA_POLYMERASE_B"/>
    <property type="match status" value="1"/>
</dbReference>
<name>DPOLA_XENLA</name>
<reference key="1">
    <citation type="journal article" date="2000" name="Genes Cells">
        <title>Central role for cdc45 in establishing an initiation complex of DNA replication in Xenopus egg extracts.</title>
        <authorList>
            <person name="Mimura S."/>
            <person name="Masuda T."/>
            <person name="Matsui T."/>
            <person name="Takisawa H."/>
        </authorList>
    </citation>
    <scope>NUCLEOTIDE SEQUENCE [MRNA]</scope>
    <source>
        <tissue>Oocyte</tissue>
    </source>
</reference>
<protein>
    <recommendedName>
        <fullName>DNA polymerase alpha catalytic subunit</fullName>
        <ecNumber>2.7.7.7</ecNumber>
    </recommendedName>
    <alternativeName>
        <fullName>DNA polymerase alpha catalytic subunit p180</fullName>
    </alternativeName>
</protein>
<accession>Q9DE46</accession>
<evidence type="ECO:0000250" key="1"/>
<evidence type="ECO:0000250" key="2">
    <source>
        <dbReference type="UniProtKB" id="P09884"/>
    </source>
</evidence>
<evidence type="ECO:0000255" key="3"/>
<evidence type="ECO:0000256" key="4">
    <source>
        <dbReference type="SAM" id="MobiDB-lite"/>
    </source>
</evidence>
<evidence type="ECO:0000305" key="5"/>
<evidence type="ECO:0007829" key="6">
    <source>
        <dbReference type="PDB" id="8G99"/>
    </source>
</evidence>
<evidence type="ECO:0007829" key="7">
    <source>
        <dbReference type="PDB" id="8G9L"/>
    </source>
</evidence>
<evidence type="ECO:0007829" key="8">
    <source>
        <dbReference type="PDB" id="8G9N"/>
    </source>
</evidence>
<evidence type="ECO:0007829" key="9">
    <source>
        <dbReference type="PDB" id="8UCU"/>
    </source>
</evidence>
<proteinExistence type="evidence at protein level"/>
<comment type="function">
    <text evidence="1">Plays an essential role in the initiation of DNA replication. During the S phase of the cell cycle, the DNA polymerase alpha complex (composed of a catalytic subunit POLA1/p180, a regulatory subunit POLA2/p70 and two primase subunits PRIM1/p49 and PRIM2/p58) is recruited to DNA at the replicative forks via direct interactions with MCM10 and WDHD1. The primase subunit of the polymerase alpha complex initiates DNA synthesis by oligomerising short RNA primers on both leading and lagging strands. These primers are initially extended by the polymerase alpha catalytic subunit and subsequently transferred to polymerase delta and polymerase epsilon for processive synthesis on the lagging and leading strand, respectively. The reason this transfer occurs is because the polymerase alpha has limited processivity and lacks intrinsic 3' exonuclease activity for proofreading error, and therefore is not well suited for replicating long complexes (By similarity).</text>
</comment>
<comment type="catalytic activity">
    <reaction>
        <text>DNA(n) + a 2'-deoxyribonucleoside 5'-triphosphate = DNA(n+1) + diphosphate</text>
        <dbReference type="Rhea" id="RHEA:22508"/>
        <dbReference type="Rhea" id="RHEA-COMP:17339"/>
        <dbReference type="Rhea" id="RHEA-COMP:17340"/>
        <dbReference type="ChEBI" id="CHEBI:33019"/>
        <dbReference type="ChEBI" id="CHEBI:61560"/>
        <dbReference type="ChEBI" id="CHEBI:173112"/>
        <dbReference type="EC" id="2.7.7.7"/>
    </reaction>
</comment>
<comment type="subunit">
    <text evidence="1">The DNA polymerase alpha complex is composed of four subunits: the catalytic subunit POLA1, the regulatory subunit POLA2, and the small and the large primase subunits PRIM1 and PRIM2 respectively. Interacts with PARP1; this interaction functions as part of the control of replication fork progression. Interacts with MCM10 and WDHD1; these interactions recruit the polymerase alpha complex to the pre-replicative complex bound to DNA. Interacts with RPA1; this interaction stabilizes the replicative complex and reduces the misincorporation rate of DNA polymerase alpha by acting as a fidelity clamp (By similarity).</text>
</comment>
<comment type="interaction">
    <interactant intactId="EBI-3645423">
        <id>Q9DE46</id>
    </interactant>
    <interactant intactId="EBI-7570880">
        <id>Q0IHI4</id>
        <label>tipin</label>
    </interactant>
    <organismsDiffer>false</organismsDiffer>
    <experiments>3</experiments>
</comment>
<comment type="interaction">
    <interactant intactId="EBI-3645423">
        <id>Q9DE46</id>
    </interactant>
    <interactant intactId="EBI-3510652">
        <id>O13046</id>
        <label>wdhd1</label>
    </interactant>
    <organismsDiffer>false</organismsDiffer>
    <experiments>2</experiments>
</comment>
<comment type="subcellular location">
    <subcellularLocation>
        <location>Nucleus</location>
    </subcellularLocation>
</comment>
<comment type="miscellaneous">
    <text>In eukaryotes there are five DNA polymerases: alpha, beta, gamma, delta, and epsilon which are responsible for different reactions of DNA synthesis.</text>
</comment>
<comment type="similarity">
    <text evidence="5">Belongs to the DNA polymerase type-B family.</text>
</comment>
<sequence>MSDSGSFAASRSRREKTEKSGRKEALERLKRAKAGEKVKYEVEQVSSIYEEVDEAEYSKLVRDRQDDDWIVDDDGTGYVEDGREIFDDDLEDNALADSGKGAKGAPKDKTNVKKSSVSKPNNIKSMFMASAVKKTTDKAVDLSKDDLLGDLLQDLKSQAVPITPPPVITLKKKKLAGSPLNPFSVPPTAPKVLPTSVKRLPAVTKPGHPAAQSKASVPRQIKKEPKAELISSAVGPLKVEAQVKEEDSGMVEFDDGDFDEPMEEDVEITPVDSSTIKTQAQSIKCVKEENIKEEKSSFITSATLNESCWDQIDEAEPMTTEIQVDSSHLPLVTGADGSQVFRFYWLDAYEDQYSQPGVVYLFGKVWIESADAYVSCCVSVKNIERTVYLLPRENRVQLSTGKDTGAPVSMMHVYQEFNEAVAEKYKIMKFKSKKVDKDYAFEIPDVPASSEYLEVRYSADSPQLPQDLKGETFSHVFGTNTSSLELFLLSRKIKGPSWLEIKSPQLSSQPMSWCKVEAVVTRPDQVSVVKDLAPPPVVVLSLSMKTVQNAKTHQNEIVAIAALVHHTFPLDKAPPQPPFQTHFCVLSKLNDCIFPYDYNEAVKQKNANIEIALTERTLLGFFLAKIHKIDPDVIVGHDIYGFDLEVLLQRINSCKVPFWSKIGRLRRSVMPKLGGRSGFAERNAACGRIICDIEISAKELIRCKSYHLSELVHQILKAERVVIPPENIRNAYNDSVHLLYMLENTWIDAKFILQIMCELNVLPLALQITNIAGNVMSRTLMGGRSERNEYLLLHAFTENNFIVPDKPVFKKMQQTTVEDNDDMGTDQNKNKSRKKAAYAGGLVLEPKVGFYDKFILLLDFNSLYPSIIQEYNICFTTVHREAPSTQKGEDQDEIPELPHSDLEMGILPREIRKLVERRRHVKQLMKQPDLNPDLYLQYDIRQKALKLTANSMYGCLGFSYSRFYAKPLAALVTHQGREILLHTKEMVQKMNLEVIYGDTDSIMINTNCNNLEEVFKLGNRVKSEINKSYKLLEIDIDGIFKSLLLLKKKKYAALTVEPTGDGKYVTKQELKGLDIVRRDWCELAKQAGNYVISQILSDQPRDSIVENIQKKLTEIGENVTNGTVPITQYEINKALTKDPQDYPDKKSLPHVHVALWINSQGGRKVKAGDTISYVICQDGSNLSASQRAYAQEQLQKQENLSIDTQYYLSQQVHPVVARICEPIDGIDSALIAMWLGLDPSQFRAHRHYQQDEENDALLGGPSQLTDEEKYRDCERFKFFCPKCGTENIYDNVFDGSGLQIEPGLKRCSKPECDASPLDYVIQVHNKLLLDIRRYIKKYYSGWLVCEEKTCQNRTRRLPLSFSRNGPICQACSKATLRSEYPEKALYTQLCFYRFIFDWDYALEKVVSEQERGHLKKKLFQESENQYKKLKSTVDQVLSRSGYSEVNLSKLFQTLNTIK</sequence>
<gene>
    <name type="primary">pola1</name>
    <name type="synonym">pola</name>
</gene>